<gene>
    <name evidence="2" type="primary">tuf1</name>
    <name type="ordered locus">Pfl01_5081</name>
</gene>
<gene>
    <name evidence="2" type="primary">tuf2</name>
    <name type="ordered locus">Pfl01_5093</name>
</gene>
<organism>
    <name type="scientific">Pseudomonas fluorescens (strain Pf0-1)</name>
    <dbReference type="NCBI Taxonomy" id="205922"/>
    <lineage>
        <taxon>Bacteria</taxon>
        <taxon>Pseudomonadati</taxon>
        <taxon>Pseudomonadota</taxon>
        <taxon>Gammaproteobacteria</taxon>
        <taxon>Pseudomonadales</taxon>
        <taxon>Pseudomonadaceae</taxon>
        <taxon>Pseudomonas</taxon>
    </lineage>
</organism>
<name>EFTU_PSEPF</name>
<keyword id="KW-0963">Cytoplasm</keyword>
<keyword id="KW-0251">Elongation factor</keyword>
<keyword id="KW-0342">GTP-binding</keyword>
<keyword id="KW-0378">Hydrolase</keyword>
<keyword id="KW-0460">Magnesium</keyword>
<keyword id="KW-0479">Metal-binding</keyword>
<keyword id="KW-0547">Nucleotide-binding</keyword>
<keyword id="KW-0648">Protein biosynthesis</keyword>
<protein>
    <recommendedName>
        <fullName evidence="2">Elongation factor Tu</fullName>
        <shortName evidence="2">EF-Tu</shortName>
        <ecNumber evidence="2">3.6.5.3</ecNumber>
    </recommendedName>
</protein>
<feature type="chain" id="PRO_0000337474" description="Elongation factor Tu">
    <location>
        <begin position="1"/>
        <end position="397"/>
    </location>
</feature>
<feature type="domain" description="tr-type G">
    <location>
        <begin position="10"/>
        <end position="207"/>
    </location>
</feature>
<feature type="region of interest" description="G1" evidence="1">
    <location>
        <begin position="19"/>
        <end position="26"/>
    </location>
</feature>
<feature type="region of interest" description="G2" evidence="1">
    <location>
        <begin position="60"/>
        <end position="64"/>
    </location>
</feature>
<feature type="region of interest" description="G3" evidence="1">
    <location>
        <begin position="81"/>
        <end position="84"/>
    </location>
</feature>
<feature type="region of interest" description="G4" evidence="1">
    <location>
        <begin position="136"/>
        <end position="139"/>
    </location>
</feature>
<feature type="region of interest" description="G5" evidence="1">
    <location>
        <begin position="174"/>
        <end position="176"/>
    </location>
</feature>
<feature type="binding site" evidence="2">
    <location>
        <begin position="19"/>
        <end position="26"/>
    </location>
    <ligand>
        <name>GTP</name>
        <dbReference type="ChEBI" id="CHEBI:37565"/>
    </ligand>
</feature>
<feature type="binding site" evidence="2">
    <location>
        <position position="26"/>
    </location>
    <ligand>
        <name>Mg(2+)</name>
        <dbReference type="ChEBI" id="CHEBI:18420"/>
    </ligand>
</feature>
<feature type="binding site" evidence="2">
    <location>
        <begin position="81"/>
        <end position="85"/>
    </location>
    <ligand>
        <name>GTP</name>
        <dbReference type="ChEBI" id="CHEBI:37565"/>
    </ligand>
</feature>
<feature type="binding site" evidence="2">
    <location>
        <begin position="136"/>
        <end position="139"/>
    </location>
    <ligand>
        <name>GTP</name>
        <dbReference type="ChEBI" id="CHEBI:37565"/>
    </ligand>
</feature>
<reference key="1">
    <citation type="journal article" date="2009" name="Genome Biol.">
        <title>Genomic and genetic analyses of diversity and plant interactions of Pseudomonas fluorescens.</title>
        <authorList>
            <person name="Silby M.W."/>
            <person name="Cerdeno-Tarraga A.M."/>
            <person name="Vernikos G.S."/>
            <person name="Giddens S.R."/>
            <person name="Jackson R.W."/>
            <person name="Preston G.M."/>
            <person name="Zhang X.-X."/>
            <person name="Moon C.D."/>
            <person name="Gehrig S.M."/>
            <person name="Godfrey S.A.C."/>
            <person name="Knight C.G."/>
            <person name="Malone J.G."/>
            <person name="Robinson Z."/>
            <person name="Spiers A.J."/>
            <person name="Harris S."/>
            <person name="Challis G.L."/>
            <person name="Yaxley A.M."/>
            <person name="Harris D."/>
            <person name="Seeger K."/>
            <person name="Murphy L."/>
            <person name="Rutter S."/>
            <person name="Squares R."/>
            <person name="Quail M.A."/>
            <person name="Saunders E."/>
            <person name="Mavromatis K."/>
            <person name="Brettin T.S."/>
            <person name="Bentley S.D."/>
            <person name="Hothersall J."/>
            <person name="Stephens E."/>
            <person name="Thomas C.M."/>
            <person name="Parkhill J."/>
            <person name="Levy S.B."/>
            <person name="Rainey P.B."/>
            <person name="Thomson N.R."/>
        </authorList>
    </citation>
    <scope>NUCLEOTIDE SEQUENCE [LARGE SCALE GENOMIC DNA]</scope>
    <source>
        <strain>Pf0-1</strain>
    </source>
</reference>
<accession>Q3K5X4</accession>
<proteinExistence type="inferred from homology"/>
<comment type="function">
    <text evidence="2">GTP hydrolase that promotes the GTP-dependent binding of aminoacyl-tRNA to the A-site of ribosomes during protein biosynthesis.</text>
</comment>
<comment type="catalytic activity">
    <reaction evidence="2">
        <text>GTP + H2O = GDP + phosphate + H(+)</text>
        <dbReference type="Rhea" id="RHEA:19669"/>
        <dbReference type="ChEBI" id="CHEBI:15377"/>
        <dbReference type="ChEBI" id="CHEBI:15378"/>
        <dbReference type="ChEBI" id="CHEBI:37565"/>
        <dbReference type="ChEBI" id="CHEBI:43474"/>
        <dbReference type="ChEBI" id="CHEBI:58189"/>
        <dbReference type="EC" id="3.6.5.3"/>
    </reaction>
    <physiologicalReaction direction="left-to-right" evidence="2">
        <dbReference type="Rhea" id="RHEA:19670"/>
    </physiologicalReaction>
</comment>
<comment type="subunit">
    <text evidence="2">Monomer.</text>
</comment>
<comment type="subcellular location">
    <subcellularLocation>
        <location evidence="2">Cytoplasm</location>
    </subcellularLocation>
</comment>
<comment type="similarity">
    <text evidence="2">Belongs to the TRAFAC class translation factor GTPase superfamily. Classic translation factor GTPase family. EF-Tu/EF-1A subfamily.</text>
</comment>
<dbReference type="EC" id="3.6.5.3" evidence="2"/>
<dbReference type="EMBL" id="CP000094">
    <property type="protein sequence ID" value="ABA76818.1"/>
    <property type="molecule type" value="Genomic_DNA"/>
</dbReference>
<dbReference type="EMBL" id="CP000094">
    <property type="protein sequence ID" value="ABA76830.1"/>
    <property type="molecule type" value="Genomic_DNA"/>
</dbReference>
<dbReference type="SMR" id="Q3K5X4"/>
<dbReference type="KEGG" id="pfo:Pfl01_5081"/>
<dbReference type="KEGG" id="pfo:Pfl01_5093"/>
<dbReference type="eggNOG" id="COG0050">
    <property type="taxonomic scope" value="Bacteria"/>
</dbReference>
<dbReference type="HOGENOM" id="CLU_007265_0_0_6"/>
<dbReference type="Proteomes" id="UP000002704">
    <property type="component" value="Chromosome"/>
</dbReference>
<dbReference type="GO" id="GO:0005829">
    <property type="term" value="C:cytosol"/>
    <property type="evidence" value="ECO:0007669"/>
    <property type="project" value="TreeGrafter"/>
</dbReference>
<dbReference type="GO" id="GO:0005525">
    <property type="term" value="F:GTP binding"/>
    <property type="evidence" value="ECO:0007669"/>
    <property type="project" value="UniProtKB-UniRule"/>
</dbReference>
<dbReference type="GO" id="GO:0003924">
    <property type="term" value="F:GTPase activity"/>
    <property type="evidence" value="ECO:0007669"/>
    <property type="project" value="InterPro"/>
</dbReference>
<dbReference type="GO" id="GO:0097216">
    <property type="term" value="F:guanosine tetraphosphate binding"/>
    <property type="evidence" value="ECO:0007669"/>
    <property type="project" value="UniProtKB-ARBA"/>
</dbReference>
<dbReference type="GO" id="GO:0003746">
    <property type="term" value="F:translation elongation factor activity"/>
    <property type="evidence" value="ECO:0007669"/>
    <property type="project" value="UniProtKB-UniRule"/>
</dbReference>
<dbReference type="CDD" id="cd01884">
    <property type="entry name" value="EF_Tu"/>
    <property type="match status" value="1"/>
</dbReference>
<dbReference type="CDD" id="cd03697">
    <property type="entry name" value="EFTU_II"/>
    <property type="match status" value="1"/>
</dbReference>
<dbReference type="CDD" id="cd03707">
    <property type="entry name" value="EFTU_III"/>
    <property type="match status" value="1"/>
</dbReference>
<dbReference type="FunFam" id="2.40.30.10:FF:000001">
    <property type="entry name" value="Elongation factor Tu"/>
    <property type="match status" value="1"/>
</dbReference>
<dbReference type="FunFam" id="3.40.50.300:FF:000003">
    <property type="entry name" value="Elongation factor Tu"/>
    <property type="match status" value="1"/>
</dbReference>
<dbReference type="Gene3D" id="3.40.50.300">
    <property type="entry name" value="P-loop containing nucleotide triphosphate hydrolases"/>
    <property type="match status" value="1"/>
</dbReference>
<dbReference type="Gene3D" id="2.40.30.10">
    <property type="entry name" value="Translation factors"/>
    <property type="match status" value="2"/>
</dbReference>
<dbReference type="HAMAP" id="MF_00118_B">
    <property type="entry name" value="EF_Tu_B"/>
    <property type="match status" value="1"/>
</dbReference>
<dbReference type="InterPro" id="IPR041709">
    <property type="entry name" value="EF-Tu_GTP-bd"/>
</dbReference>
<dbReference type="InterPro" id="IPR050055">
    <property type="entry name" value="EF-Tu_GTPase"/>
</dbReference>
<dbReference type="InterPro" id="IPR004161">
    <property type="entry name" value="EFTu-like_2"/>
</dbReference>
<dbReference type="InterPro" id="IPR033720">
    <property type="entry name" value="EFTU_2"/>
</dbReference>
<dbReference type="InterPro" id="IPR031157">
    <property type="entry name" value="G_TR_CS"/>
</dbReference>
<dbReference type="InterPro" id="IPR027417">
    <property type="entry name" value="P-loop_NTPase"/>
</dbReference>
<dbReference type="InterPro" id="IPR005225">
    <property type="entry name" value="Small_GTP-bd"/>
</dbReference>
<dbReference type="InterPro" id="IPR000795">
    <property type="entry name" value="T_Tr_GTP-bd_dom"/>
</dbReference>
<dbReference type="InterPro" id="IPR009000">
    <property type="entry name" value="Transl_B-barrel_sf"/>
</dbReference>
<dbReference type="InterPro" id="IPR009001">
    <property type="entry name" value="Transl_elong_EF1A/Init_IF2_C"/>
</dbReference>
<dbReference type="InterPro" id="IPR004541">
    <property type="entry name" value="Transl_elong_EFTu/EF1A_bac/org"/>
</dbReference>
<dbReference type="InterPro" id="IPR004160">
    <property type="entry name" value="Transl_elong_EFTu/EF1A_C"/>
</dbReference>
<dbReference type="NCBIfam" id="TIGR00485">
    <property type="entry name" value="EF-Tu"/>
    <property type="match status" value="1"/>
</dbReference>
<dbReference type="NCBIfam" id="NF000766">
    <property type="entry name" value="PRK00049.1"/>
    <property type="match status" value="1"/>
</dbReference>
<dbReference type="NCBIfam" id="NF009372">
    <property type="entry name" value="PRK12735.1"/>
    <property type="match status" value="1"/>
</dbReference>
<dbReference type="NCBIfam" id="NF009373">
    <property type="entry name" value="PRK12736.1"/>
    <property type="match status" value="1"/>
</dbReference>
<dbReference type="NCBIfam" id="TIGR00231">
    <property type="entry name" value="small_GTP"/>
    <property type="match status" value="1"/>
</dbReference>
<dbReference type="PANTHER" id="PTHR43721:SF22">
    <property type="entry name" value="ELONGATION FACTOR TU, MITOCHONDRIAL"/>
    <property type="match status" value="1"/>
</dbReference>
<dbReference type="PANTHER" id="PTHR43721">
    <property type="entry name" value="ELONGATION FACTOR TU-RELATED"/>
    <property type="match status" value="1"/>
</dbReference>
<dbReference type="Pfam" id="PF00009">
    <property type="entry name" value="GTP_EFTU"/>
    <property type="match status" value="1"/>
</dbReference>
<dbReference type="Pfam" id="PF03144">
    <property type="entry name" value="GTP_EFTU_D2"/>
    <property type="match status" value="1"/>
</dbReference>
<dbReference type="Pfam" id="PF03143">
    <property type="entry name" value="GTP_EFTU_D3"/>
    <property type="match status" value="1"/>
</dbReference>
<dbReference type="PRINTS" id="PR00315">
    <property type="entry name" value="ELONGATNFCT"/>
</dbReference>
<dbReference type="SUPFAM" id="SSF50465">
    <property type="entry name" value="EF-Tu/eEF-1alpha/eIF2-gamma C-terminal domain"/>
    <property type="match status" value="1"/>
</dbReference>
<dbReference type="SUPFAM" id="SSF52540">
    <property type="entry name" value="P-loop containing nucleoside triphosphate hydrolases"/>
    <property type="match status" value="1"/>
</dbReference>
<dbReference type="SUPFAM" id="SSF50447">
    <property type="entry name" value="Translation proteins"/>
    <property type="match status" value="1"/>
</dbReference>
<dbReference type="PROSITE" id="PS00301">
    <property type="entry name" value="G_TR_1"/>
    <property type="match status" value="1"/>
</dbReference>
<dbReference type="PROSITE" id="PS51722">
    <property type="entry name" value="G_TR_2"/>
    <property type="match status" value="1"/>
</dbReference>
<sequence>MAKEKFDRSLPHVNVGTIGHVDHGKTTLTAALTRVCSEVFGSAVVEFDKIDSAPEEKARGITINTAHVEYNSNIRHYAHVDCPGHADYVKNMITGAAQMDGAILVCSAADGPMPQTREHILLSRQVGVPYIVVFLNKADLVDDAELLELVEMEVRDLLSTYDFPGDDTPIIIGSARMALEGKDDNEMGTTAVKKLVETLDSYIPEPERAIDKPFLMPIEDVFSISGRGTVVTGRIERGIVRVQDALEIVGLRDTTTTTCTGVEMFRKLLDEGRAGENCGVLLRGTKRDDVERGQVLVKPGSVKPHTKFTAEVYVLSKEEGGRHTPFFKGYRPQFYFRTTDVTGNCELPEGVEMVMPGDNIQMTVTLIKTIAMEDGLRFAIREGGRTVGAGVVAKIIE</sequence>
<evidence type="ECO:0000250" key="1"/>
<evidence type="ECO:0000255" key="2">
    <source>
        <dbReference type="HAMAP-Rule" id="MF_00118"/>
    </source>
</evidence>